<proteinExistence type="inferred from homology"/>
<accession>Q83KR4</accession>
<accession>Q7UAE8</accession>
<reference key="1">
    <citation type="journal article" date="2002" name="Nucleic Acids Res.">
        <title>Genome sequence of Shigella flexneri 2a: insights into pathogenicity through comparison with genomes of Escherichia coli K12 and O157.</title>
        <authorList>
            <person name="Jin Q."/>
            <person name="Yuan Z."/>
            <person name="Xu J."/>
            <person name="Wang Y."/>
            <person name="Shen Y."/>
            <person name="Lu W."/>
            <person name="Wang J."/>
            <person name="Liu H."/>
            <person name="Yang J."/>
            <person name="Yang F."/>
            <person name="Zhang X."/>
            <person name="Zhang J."/>
            <person name="Yang G."/>
            <person name="Wu H."/>
            <person name="Qu D."/>
            <person name="Dong J."/>
            <person name="Sun L."/>
            <person name="Xue Y."/>
            <person name="Zhao A."/>
            <person name="Gao Y."/>
            <person name="Zhu J."/>
            <person name="Kan B."/>
            <person name="Ding K."/>
            <person name="Chen S."/>
            <person name="Cheng H."/>
            <person name="Yao Z."/>
            <person name="He B."/>
            <person name="Chen R."/>
            <person name="Ma D."/>
            <person name="Qiang B."/>
            <person name="Wen Y."/>
            <person name="Hou Y."/>
            <person name="Yu J."/>
        </authorList>
    </citation>
    <scope>NUCLEOTIDE SEQUENCE [LARGE SCALE GENOMIC DNA]</scope>
    <source>
        <strain>301 / Serotype 2a</strain>
    </source>
</reference>
<reference key="2">
    <citation type="journal article" date="2003" name="Infect. Immun.">
        <title>Complete genome sequence and comparative genomics of Shigella flexneri serotype 2a strain 2457T.</title>
        <authorList>
            <person name="Wei J."/>
            <person name="Goldberg M.B."/>
            <person name="Burland V."/>
            <person name="Venkatesan M.M."/>
            <person name="Deng W."/>
            <person name="Fournier G."/>
            <person name="Mayhew G.F."/>
            <person name="Plunkett G. III"/>
            <person name="Rose D.J."/>
            <person name="Darling A."/>
            <person name="Mau B."/>
            <person name="Perna N.T."/>
            <person name="Payne S.M."/>
            <person name="Runyen-Janecky L.J."/>
            <person name="Zhou S."/>
            <person name="Schwartz D.C."/>
            <person name="Blattner F.R."/>
        </authorList>
    </citation>
    <scope>NUCLEOTIDE SEQUENCE [LARGE SCALE GENOMIC DNA]</scope>
    <source>
        <strain>ATCC 700930 / 2457T / Serotype 2a</strain>
    </source>
</reference>
<name>RUVA_SHIFL</name>
<gene>
    <name evidence="1" type="primary">ruvA</name>
    <name type="ordered locus">SF1871</name>
    <name type="ordered locus">S1937</name>
</gene>
<evidence type="ECO:0000255" key="1">
    <source>
        <dbReference type="HAMAP-Rule" id="MF_00031"/>
    </source>
</evidence>
<evidence type="ECO:0000305" key="2"/>
<keyword id="KW-0963">Cytoplasm</keyword>
<keyword id="KW-0227">DNA damage</keyword>
<keyword id="KW-0233">DNA recombination</keyword>
<keyword id="KW-0234">DNA repair</keyword>
<keyword id="KW-0238">DNA-binding</keyword>
<keyword id="KW-1185">Reference proteome</keyword>
<organism>
    <name type="scientific">Shigella flexneri</name>
    <dbReference type="NCBI Taxonomy" id="623"/>
    <lineage>
        <taxon>Bacteria</taxon>
        <taxon>Pseudomonadati</taxon>
        <taxon>Pseudomonadota</taxon>
        <taxon>Gammaproteobacteria</taxon>
        <taxon>Enterobacterales</taxon>
        <taxon>Enterobacteriaceae</taxon>
        <taxon>Shigella</taxon>
    </lineage>
</organism>
<dbReference type="EMBL" id="AE005674">
    <property type="protein sequence ID" value="AAN43428.1"/>
    <property type="molecule type" value="Genomic_DNA"/>
</dbReference>
<dbReference type="EMBL" id="AE014073">
    <property type="protein sequence ID" value="AAP17252.1"/>
    <property type="molecule type" value="Genomic_DNA"/>
</dbReference>
<dbReference type="RefSeq" id="NP_707721.1">
    <property type="nucleotide sequence ID" value="NC_004337.2"/>
</dbReference>
<dbReference type="RefSeq" id="WP_000580330.1">
    <property type="nucleotide sequence ID" value="NZ_CP123365.1"/>
</dbReference>
<dbReference type="SMR" id="Q83KR4"/>
<dbReference type="STRING" id="198214.SF1871"/>
<dbReference type="PaxDb" id="198214-SF1871"/>
<dbReference type="GeneID" id="1025030"/>
<dbReference type="KEGG" id="sfl:SF1871"/>
<dbReference type="KEGG" id="sfx:S1937"/>
<dbReference type="PATRIC" id="fig|198214.7.peg.2229"/>
<dbReference type="HOGENOM" id="CLU_087936_0_0_6"/>
<dbReference type="Proteomes" id="UP000001006">
    <property type="component" value="Chromosome"/>
</dbReference>
<dbReference type="Proteomes" id="UP000002673">
    <property type="component" value="Chromosome"/>
</dbReference>
<dbReference type="GO" id="GO:0005737">
    <property type="term" value="C:cytoplasm"/>
    <property type="evidence" value="ECO:0007669"/>
    <property type="project" value="UniProtKB-SubCell"/>
</dbReference>
<dbReference type="GO" id="GO:0009379">
    <property type="term" value="C:Holliday junction helicase complex"/>
    <property type="evidence" value="ECO:0007669"/>
    <property type="project" value="InterPro"/>
</dbReference>
<dbReference type="GO" id="GO:0048476">
    <property type="term" value="C:Holliday junction resolvase complex"/>
    <property type="evidence" value="ECO:0007669"/>
    <property type="project" value="UniProtKB-UniRule"/>
</dbReference>
<dbReference type="GO" id="GO:0005524">
    <property type="term" value="F:ATP binding"/>
    <property type="evidence" value="ECO:0007669"/>
    <property type="project" value="InterPro"/>
</dbReference>
<dbReference type="GO" id="GO:0000400">
    <property type="term" value="F:four-way junction DNA binding"/>
    <property type="evidence" value="ECO:0007669"/>
    <property type="project" value="UniProtKB-UniRule"/>
</dbReference>
<dbReference type="GO" id="GO:0009378">
    <property type="term" value="F:four-way junction helicase activity"/>
    <property type="evidence" value="ECO:0007669"/>
    <property type="project" value="InterPro"/>
</dbReference>
<dbReference type="GO" id="GO:0006310">
    <property type="term" value="P:DNA recombination"/>
    <property type="evidence" value="ECO:0007669"/>
    <property type="project" value="UniProtKB-UniRule"/>
</dbReference>
<dbReference type="GO" id="GO:0006281">
    <property type="term" value="P:DNA repair"/>
    <property type="evidence" value="ECO:0007669"/>
    <property type="project" value="UniProtKB-UniRule"/>
</dbReference>
<dbReference type="CDD" id="cd14332">
    <property type="entry name" value="UBA_RuvA_C"/>
    <property type="match status" value="1"/>
</dbReference>
<dbReference type="FunFam" id="1.10.150.20:FF:000012">
    <property type="entry name" value="Holliday junction ATP-dependent DNA helicase RuvA"/>
    <property type="match status" value="1"/>
</dbReference>
<dbReference type="FunFam" id="1.10.8.10:FF:000008">
    <property type="entry name" value="Holliday junction ATP-dependent DNA helicase RuvA"/>
    <property type="match status" value="1"/>
</dbReference>
<dbReference type="FunFam" id="2.40.50.140:FF:000083">
    <property type="entry name" value="Holliday junction ATP-dependent DNA helicase RuvA"/>
    <property type="match status" value="1"/>
</dbReference>
<dbReference type="Gene3D" id="1.10.150.20">
    <property type="entry name" value="5' to 3' exonuclease, C-terminal subdomain"/>
    <property type="match status" value="1"/>
</dbReference>
<dbReference type="Gene3D" id="1.10.8.10">
    <property type="entry name" value="DNA helicase RuvA subunit, C-terminal domain"/>
    <property type="match status" value="1"/>
</dbReference>
<dbReference type="Gene3D" id="2.40.50.140">
    <property type="entry name" value="Nucleic acid-binding proteins"/>
    <property type="match status" value="1"/>
</dbReference>
<dbReference type="HAMAP" id="MF_00031">
    <property type="entry name" value="DNA_HJ_migration_RuvA"/>
    <property type="match status" value="1"/>
</dbReference>
<dbReference type="InterPro" id="IPR013849">
    <property type="entry name" value="DNA_helicase_Holl-junc_RuvA_I"/>
</dbReference>
<dbReference type="InterPro" id="IPR003583">
    <property type="entry name" value="Hlx-hairpin-Hlx_DNA-bd_motif"/>
</dbReference>
<dbReference type="InterPro" id="IPR012340">
    <property type="entry name" value="NA-bd_OB-fold"/>
</dbReference>
<dbReference type="InterPro" id="IPR000085">
    <property type="entry name" value="RuvA"/>
</dbReference>
<dbReference type="InterPro" id="IPR010994">
    <property type="entry name" value="RuvA_2-like"/>
</dbReference>
<dbReference type="InterPro" id="IPR011114">
    <property type="entry name" value="RuvA_C"/>
</dbReference>
<dbReference type="InterPro" id="IPR036267">
    <property type="entry name" value="RuvA_C_sf"/>
</dbReference>
<dbReference type="NCBIfam" id="TIGR00084">
    <property type="entry name" value="ruvA"/>
    <property type="match status" value="1"/>
</dbReference>
<dbReference type="Pfam" id="PF14520">
    <property type="entry name" value="HHH_5"/>
    <property type="match status" value="1"/>
</dbReference>
<dbReference type="Pfam" id="PF07499">
    <property type="entry name" value="RuvA_C"/>
    <property type="match status" value="1"/>
</dbReference>
<dbReference type="Pfam" id="PF01330">
    <property type="entry name" value="RuvA_N"/>
    <property type="match status" value="1"/>
</dbReference>
<dbReference type="SMART" id="SM00278">
    <property type="entry name" value="HhH1"/>
    <property type="match status" value="2"/>
</dbReference>
<dbReference type="SUPFAM" id="SSF46929">
    <property type="entry name" value="DNA helicase RuvA subunit, C-terminal domain"/>
    <property type="match status" value="1"/>
</dbReference>
<dbReference type="SUPFAM" id="SSF50249">
    <property type="entry name" value="Nucleic acid-binding proteins"/>
    <property type="match status" value="1"/>
</dbReference>
<dbReference type="SUPFAM" id="SSF47781">
    <property type="entry name" value="RuvA domain 2-like"/>
    <property type="match status" value="1"/>
</dbReference>
<protein>
    <recommendedName>
        <fullName evidence="1">Holliday junction branch migration complex subunit RuvA</fullName>
    </recommendedName>
</protein>
<sequence length="203" mass="22142">MIGRLRGIIIEKQPPLVLIEVGGVGYEVHMPMTCFYELPEAGQEAIVFTHFVVREDAQLLYGFNNKQERTLFKELIKTNGVGPKLALAILSGMSAQQFVNAVEREEVGPLVKLPGIGKKTAERLIVEMKDRFKGLHGDLFTPAADLVLTSPASPATDDAEQEAVAALVALGYKPQEASRMVSKIARPDTSSETLIREALRAAL</sequence>
<comment type="function">
    <text evidence="1">The RuvA-RuvB-RuvC complex processes Holliday junction (HJ) DNA during genetic recombination and DNA repair, while the RuvA-RuvB complex plays an important role in the rescue of blocked DNA replication forks via replication fork reversal (RFR). RuvA specifically binds to HJ cruciform DNA, conferring on it an open structure. The RuvB hexamer acts as an ATP-dependent pump, pulling dsDNA into and through the RuvAB complex. HJ branch migration allows RuvC to scan DNA until it finds its consensus sequence, where it cleaves and resolves the cruciform DNA.</text>
</comment>
<comment type="subunit">
    <text evidence="1">Homotetramer. Forms an RuvA(8)-RuvB(12)-Holliday junction (HJ) complex. HJ DNA is sandwiched between 2 RuvA tetramers; dsDNA enters through RuvA and exits via RuvB. An RuvB hexamer assembles on each DNA strand where it exits the tetramer. Each RuvB hexamer is contacted by two RuvA subunits (via domain III) on 2 adjacent RuvB subunits; this complex drives branch migration. In the full resolvosome a probable DNA-RuvA(4)-RuvB(12)-RuvC(2) complex forms which resolves the HJ.</text>
</comment>
<comment type="subcellular location">
    <subcellularLocation>
        <location evidence="1">Cytoplasm</location>
    </subcellularLocation>
</comment>
<comment type="domain">
    <text evidence="1">Has three domains with a flexible linker between the domains II and III and assumes an 'L' shape. Domain III is highly mobile and contacts RuvB.</text>
</comment>
<comment type="similarity">
    <text evidence="1">Belongs to the RuvA family.</text>
</comment>
<feature type="chain" id="PRO_0000094677" description="Holliday junction branch migration complex subunit RuvA">
    <location>
        <begin position="1"/>
        <end position="203"/>
    </location>
</feature>
<feature type="region of interest" description="Domain I" evidence="1">
    <location>
        <begin position="1"/>
        <end position="64"/>
    </location>
</feature>
<feature type="region of interest" description="Domain II" evidence="1">
    <location>
        <begin position="65"/>
        <end position="142"/>
    </location>
</feature>
<feature type="region of interest" description="Flexible linker" evidence="1">
    <location>
        <begin position="143"/>
        <end position="154"/>
    </location>
</feature>
<feature type="region of interest" description="Domain III" evidence="1">
    <location>
        <begin position="155"/>
        <end position="203"/>
    </location>
</feature>
<feature type="sequence conflict" description="In Ref. 2; AAP17252." evidence="2" ref="2">
    <original>P</original>
    <variation>A</variation>
    <location>
        <position position="109"/>
    </location>
</feature>